<dbReference type="EC" id="3.4.24.-"/>
<dbReference type="EMBL" id="FJ356719">
    <property type="protein sequence ID" value="ACJ04074.1"/>
    <property type="molecule type" value="Genomic_DNA"/>
</dbReference>
<dbReference type="EMBL" id="DQ384953">
    <property type="protein sequence ID" value="ABL84991.1"/>
    <property type="molecule type" value="Genomic_DNA"/>
</dbReference>
<dbReference type="SMR" id="B6VA81"/>
<dbReference type="MEROPS" id="M36.001"/>
<dbReference type="GlyCosmos" id="B6VA81">
    <property type="glycosylation" value="3 sites, No reported glycans"/>
</dbReference>
<dbReference type="VEuPathDB" id="FungiDB:TEQG_04323"/>
<dbReference type="GO" id="GO:0005576">
    <property type="term" value="C:extracellular region"/>
    <property type="evidence" value="ECO:0007669"/>
    <property type="project" value="UniProtKB-SubCell"/>
</dbReference>
<dbReference type="GO" id="GO:0004222">
    <property type="term" value="F:metalloendopeptidase activity"/>
    <property type="evidence" value="ECO:0007669"/>
    <property type="project" value="InterPro"/>
</dbReference>
<dbReference type="GO" id="GO:0008270">
    <property type="term" value="F:zinc ion binding"/>
    <property type="evidence" value="ECO:0007669"/>
    <property type="project" value="InterPro"/>
</dbReference>
<dbReference type="GO" id="GO:0006508">
    <property type="term" value="P:proteolysis"/>
    <property type="evidence" value="ECO:0007669"/>
    <property type="project" value="UniProtKB-KW"/>
</dbReference>
<dbReference type="CDD" id="cd09596">
    <property type="entry name" value="M36"/>
    <property type="match status" value="1"/>
</dbReference>
<dbReference type="Gene3D" id="3.10.170.10">
    <property type="match status" value="1"/>
</dbReference>
<dbReference type="Gene3D" id="1.10.390.10">
    <property type="entry name" value="Neutral Protease Domain 2"/>
    <property type="match status" value="1"/>
</dbReference>
<dbReference type="InterPro" id="IPR011096">
    <property type="entry name" value="FTP_domain"/>
</dbReference>
<dbReference type="InterPro" id="IPR050371">
    <property type="entry name" value="Fungal_virulence_M36"/>
</dbReference>
<dbReference type="InterPro" id="IPR001842">
    <property type="entry name" value="Peptidase_M36"/>
</dbReference>
<dbReference type="InterPro" id="IPR027268">
    <property type="entry name" value="Peptidase_M4/M1_CTD_sf"/>
</dbReference>
<dbReference type="PANTHER" id="PTHR33478">
    <property type="entry name" value="EXTRACELLULAR METALLOPROTEINASE MEP"/>
    <property type="match status" value="1"/>
</dbReference>
<dbReference type="PANTHER" id="PTHR33478:SF1">
    <property type="entry name" value="EXTRACELLULAR METALLOPROTEINASE MEP"/>
    <property type="match status" value="1"/>
</dbReference>
<dbReference type="Pfam" id="PF07504">
    <property type="entry name" value="FTP"/>
    <property type="match status" value="1"/>
</dbReference>
<dbReference type="Pfam" id="PF02128">
    <property type="entry name" value="Peptidase_M36"/>
    <property type="match status" value="1"/>
</dbReference>
<dbReference type="PRINTS" id="PR00999">
    <property type="entry name" value="FUNGALYSIN"/>
</dbReference>
<dbReference type="SUPFAM" id="SSF55486">
    <property type="entry name" value="Metalloproteases ('zincins'), catalytic domain"/>
    <property type="match status" value="1"/>
</dbReference>
<dbReference type="PROSITE" id="PS00142">
    <property type="entry name" value="ZINC_PROTEASE"/>
    <property type="match status" value="1"/>
</dbReference>
<reference key="1">
    <citation type="submission" date="2008-10" db="EMBL/GenBank/DDBJ databases">
        <title>Comparing putative pathogenicity factors between Trichophyton tonsurans and Trichophyton equinum.</title>
        <authorList>
            <person name="Preuett B.L."/>
            <person name="Abdel-Rahman S.M."/>
        </authorList>
    </citation>
    <scope>NUCLEOTIDE SEQUENCE [GENOMIC DNA]</scope>
</reference>
<reference key="2">
    <citation type="journal article" date="2007" name="FEMS Microbiol. Lett.">
        <title>Closely related dermatophyte species produce different patterns of secreted proteins.</title>
        <authorList>
            <person name="Giddey K."/>
            <person name="Favre B."/>
            <person name="Quadroni M."/>
            <person name="Monod M."/>
        </authorList>
    </citation>
    <scope>NUCLEOTIDE SEQUENCE [GENOMIC DNA] OF 245-636</scope>
    <scope>IDENTIFICATION BY MASS SPECTROMETRY</scope>
    <scope>SUBCELLULAR LOCATION</scope>
    <source>
        <strain>IHEM 20668</strain>
    </source>
</reference>
<evidence type="ECO:0000250" key="1"/>
<evidence type="ECO:0000255" key="2"/>
<evidence type="ECO:0000255" key="3">
    <source>
        <dbReference type="PROSITE-ProRule" id="PRU10095"/>
    </source>
</evidence>
<evidence type="ECO:0000256" key="4">
    <source>
        <dbReference type="SAM" id="MobiDB-lite"/>
    </source>
</evidence>
<evidence type="ECO:0000305" key="5"/>
<proteinExistence type="evidence at protein level"/>
<accession>B6VA81</accession>
<accession>A1XIM3</accession>
<sequence>MHGLLLAGLLALPLNVLAHPTESHSSGISRRAIDITSYRLPQISKYTKSDAVPKQDDESFTTSSTGDDNVSSGDYVTTATDWLKKTLPKATYRLVNDHYIGDSGIGHVHFRQTAHGIDIDNTDFNVNIGRDGKVFSFGNSFYDGEIPKANPMVKRDFSDPVNALQVAIQTLNLPVTAKPENVKAKPVEGKENFKFEGTSGAFSDPKAQLVYLQKDGGLVPSWKVETDIGDNWLLTYVDANKNDKVHSVVDYVSAAEYKVYPWGINDPTEGNRTSIHLPWFKTLSTDWHIDGKGWYSTTRGNNAIAQENPTGGPEYENNYRPKSPLFIFKYPYSEAMTPPSSYRDASITQLFYTTNVYHDVLYILGFNEKAGNFQVNNWNKGGVGGDFAILNSQDGSGVNNANFATPPDGQPGRMRMYTWNASTPERDGCFEAGIVIHEYTHGVSNRLTGGPANSRCLAALESGGMGEGWSDFFATAIRLKAGDTRATDYTMGEWASNRPNGIRKYRYSTNLTTNPHMYVDADGLTSVHAIGTIWASMLYELLWNLIDKHGKGDVTKVRPVLKNGVPTDGRHLAMKLVLDGMALQPCLPNFVQARDAILDADKVLTQGSNKCEIWKAFAKRGLGVGAVFNPSKRTGSNELPAGC</sequence>
<organism>
    <name type="scientific">Trichophyton equinum</name>
    <name type="common">Horse ringworm fungus</name>
    <dbReference type="NCBI Taxonomy" id="63418"/>
    <lineage>
        <taxon>Eukaryota</taxon>
        <taxon>Fungi</taxon>
        <taxon>Dikarya</taxon>
        <taxon>Ascomycota</taxon>
        <taxon>Pezizomycotina</taxon>
        <taxon>Eurotiomycetes</taxon>
        <taxon>Eurotiomycetidae</taxon>
        <taxon>Onygenales</taxon>
        <taxon>Arthrodermataceae</taxon>
        <taxon>Trichophyton</taxon>
    </lineage>
</organism>
<comment type="function">
    <text evidence="1">Secreted metalloproteinase probably acting as a virulence factor.</text>
</comment>
<comment type="cofactor">
    <cofactor evidence="1">
        <name>Zn(2+)</name>
        <dbReference type="ChEBI" id="CHEBI:29105"/>
    </cofactor>
    <text evidence="1">Binds 1 zinc ion per subunit.</text>
</comment>
<comment type="subcellular location">
    <subcellularLocation>
        <location evidence="1">Secreted</location>
    </subcellularLocation>
</comment>
<comment type="similarity">
    <text evidence="5">Belongs to the peptidase M36 family.</text>
</comment>
<name>MEP4_TRIEQ</name>
<feature type="signal peptide" evidence="2">
    <location>
        <begin position="1"/>
        <end position="18"/>
    </location>
</feature>
<feature type="propeptide" id="PRO_0000380864" evidence="1">
    <location>
        <begin position="19"/>
        <end position="254"/>
    </location>
</feature>
<feature type="chain" id="PRO_0000380865" description="Extracellular metalloproteinase 4">
    <location>
        <begin position="255"/>
        <end position="643"/>
    </location>
</feature>
<feature type="region of interest" description="Disordered" evidence="4">
    <location>
        <begin position="47"/>
        <end position="71"/>
    </location>
</feature>
<feature type="compositionally biased region" description="Basic and acidic residues" evidence="4">
    <location>
        <begin position="47"/>
        <end position="57"/>
    </location>
</feature>
<feature type="compositionally biased region" description="Polar residues" evidence="4">
    <location>
        <begin position="60"/>
        <end position="71"/>
    </location>
</feature>
<feature type="active site" evidence="3">
    <location>
        <position position="438"/>
    </location>
</feature>
<feature type="binding site" evidence="3">
    <location>
        <position position="437"/>
    </location>
    <ligand>
        <name>Zn(2+)</name>
        <dbReference type="ChEBI" id="CHEBI:29105"/>
        <note>catalytic</note>
    </ligand>
</feature>
<feature type="binding site" evidence="3">
    <location>
        <position position="441"/>
    </location>
    <ligand>
        <name>Zn(2+)</name>
        <dbReference type="ChEBI" id="CHEBI:29105"/>
        <note>catalytic</note>
    </ligand>
</feature>
<feature type="glycosylation site" description="N-linked (GlcNAc...) asparagine" evidence="2">
    <location>
        <position position="271"/>
    </location>
</feature>
<feature type="glycosylation site" description="N-linked (GlcNAc...) asparagine" evidence="2">
    <location>
        <position position="420"/>
    </location>
</feature>
<feature type="glycosylation site" description="N-linked (GlcNAc...) asparagine" evidence="2">
    <location>
        <position position="510"/>
    </location>
</feature>
<gene>
    <name type="primary">MEP4</name>
</gene>
<keyword id="KW-0325">Glycoprotein</keyword>
<keyword id="KW-0378">Hydrolase</keyword>
<keyword id="KW-0479">Metal-binding</keyword>
<keyword id="KW-0482">Metalloprotease</keyword>
<keyword id="KW-0645">Protease</keyword>
<keyword id="KW-0964">Secreted</keyword>
<keyword id="KW-0732">Signal</keyword>
<keyword id="KW-0843">Virulence</keyword>
<keyword id="KW-0862">Zinc</keyword>
<keyword id="KW-0865">Zymogen</keyword>
<protein>
    <recommendedName>
        <fullName>Extracellular metalloproteinase 4</fullName>
        <ecNumber>3.4.24.-</ecNumber>
    </recommendedName>
    <alternativeName>
        <fullName>Fungalysin MEP4</fullName>
    </alternativeName>
</protein>